<sequence>MAAPSEPAGFPRGSRFSFLPGGARSEMTDDLVTDARGRGARHRDDTTPAAAPAPQGLEHGKRPCRACVDFKSWMRTQQKRDIKFREDCPQDREELGRHTWAFLHTLAAYYPDRPTPEQQQDMAQFIHIFSKFYPCEECAEDIRKRIGRNQPDTSTRVSFSQWLCRLHNEVNRKLGKPDFDCSRVDERWRDGWKDGSCD</sequence>
<organism>
    <name type="scientific">Mus musculus</name>
    <name type="common">Mouse</name>
    <dbReference type="NCBI Taxonomy" id="10090"/>
    <lineage>
        <taxon>Eukaryota</taxon>
        <taxon>Metazoa</taxon>
        <taxon>Chordata</taxon>
        <taxon>Craniata</taxon>
        <taxon>Vertebrata</taxon>
        <taxon>Euteleostomi</taxon>
        <taxon>Mammalia</taxon>
        <taxon>Eutheria</taxon>
        <taxon>Euarchontoglires</taxon>
        <taxon>Glires</taxon>
        <taxon>Rodentia</taxon>
        <taxon>Myomorpha</taxon>
        <taxon>Muroidea</taxon>
        <taxon>Muridae</taxon>
        <taxon>Murinae</taxon>
        <taxon>Mus</taxon>
        <taxon>Mus</taxon>
    </lineage>
</organism>
<keyword id="KW-1015">Disulfide bond</keyword>
<keyword id="KW-0274">FAD</keyword>
<keyword id="KW-0285">Flavoprotein</keyword>
<keyword id="KW-0339">Growth factor</keyword>
<keyword id="KW-0496">Mitochondrion</keyword>
<keyword id="KW-0560">Oxidoreductase</keyword>
<keyword id="KW-1185">Reference proteome</keyword>
<gene>
    <name type="primary">Gfer</name>
    <name type="synonym">Alr</name>
    <name type="ORF">MNCb-0663</name>
</gene>
<accession>P56213</accession>
<accession>Q8CIF8</accession>
<accession>Q9JJE6</accession>
<dbReference type="EC" id="1.8.3.2"/>
<dbReference type="EMBL" id="U40494">
    <property type="protein sequence ID" value="AAD10339.1"/>
    <property type="molecule type" value="Genomic_DNA"/>
</dbReference>
<dbReference type="EMBL" id="AB041561">
    <property type="protein sequence ID" value="BAA95045.1"/>
    <property type="molecule type" value="mRNA"/>
</dbReference>
<dbReference type="EMBL" id="AK146579">
    <property type="protein sequence ID" value="BAE27275.1"/>
    <property type="molecule type" value="mRNA"/>
</dbReference>
<dbReference type="EMBL" id="CH466606">
    <property type="protein sequence ID" value="EDL22354.1"/>
    <property type="molecule type" value="Genomic_DNA"/>
</dbReference>
<dbReference type="EMBL" id="BC023941">
    <property type="protein sequence ID" value="AAH23941.1"/>
    <property type="molecule type" value="mRNA"/>
</dbReference>
<dbReference type="EMBL" id="AF148688">
    <property type="protein sequence ID" value="AAD36987.1"/>
    <property type="status" value="ALT_INIT"/>
    <property type="molecule type" value="mRNA"/>
</dbReference>
<dbReference type="CCDS" id="CCDS28492.1"/>
<dbReference type="RefSeq" id="NP_075527.2">
    <property type="nucleotide sequence ID" value="NM_023040.3"/>
</dbReference>
<dbReference type="SMR" id="P56213"/>
<dbReference type="BioGRID" id="198079">
    <property type="interactions" value="4"/>
</dbReference>
<dbReference type="FunCoup" id="P56213">
    <property type="interactions" value="1934"/>
</dbReference>
<dbReference type="STRING" id="10090.ENSMUSP00000049186"/>
<dbReference type="GlyGen" id="P56213">
    <property type="glycosylation" value="1 site"/>
</dbReference>
<dbReference type="iPTMnet" id="P56213"/>
<dbReference type="PhosphoSitePlus" id="P56213"/>
<dbReference type="SwissPalm" id="P56213"/>
<dbReference type="jPOST" id="P56213"/>
<dbReference type="PaxDb" id="10090-ENSMUSP00000049186"/>
<dbReference type="PeptideAtlas" id="P56213"/>
<dbReference type="ProteomicsDB" id="282076"/>
<dbReference type="Pumba" id="P56213"/>
<dbReference type="Antibodypedia" id="42516">
    <property type="antibodies" value="260 antibodies from 31 providers"/>
</dbReference>
<dbReference type="DNASU" id="11692"/>
<dbReference type="Ensembl" id="ENSMUST00000046839.10">
    <property type="protein sequence ID" value="ENSMUSP00000049186.9"/>
    <property type="gene ID" value="ENSMUSG00000040888.12"/>
</dbReference>
<dbReference type="Ensembl" id="ENSMUST00000234197.2">
    <property type="protein sequence ID" value="ENSMUSP00000157329.2"/>
    <property type="gene ID" value="ENSMUSG00000040888.12"/>
</dbReference>
<dbReference type="Ensembl" id="ENSMUST00000234520.2">
    <property type="protein sequence ID" value="ENSMUSP00000157116.2"/>
    <property type="gene ID" value="ENSMUSG00000040888.12"/>
</dbReference>
<dbReference type="GeneID" id="11692"/>
<dbReference type="KEGG" id="mmu:11692"/>
<dbReference type="UCSC" id="uc008axr.1">
    <property type="organism name" value="mouse"/>
</dbReference>
<dbReference type="AGR" id="MGI:107757"/>
<dbReference type="CTD" id="2671"/>
<dbReference type="MGI" id="MGI:107757">
    <property type="gene designation" value="Gfer"/>
</dbReference>
<dbReference type="VEuPathDB" id="HostDB:ENSMUSG00000040888"/>
<dbReference type="eggNOG" id="KOG3355">
    <property type="taxonomic scope" value="Eukaryota"/>
</dbReference>
<dbReference type="GeneTree" id="ENSGT00390000001979"/>
<dbReference type="HOGENOM" id="CLU_070631_1_1_1"/>
<dbReference type="InParanoid" id="P56213"/>
<dbReference type="OMA" id="TWMCEAH"/>
<dbReference type="OrthoDB" id="25061at9989"/>
<dbReference type="PhylomeDB" id="P56213"/>
<dbReference type="TreeFam" id="TF105271"/>
<dbReference type="BioGRID-ORCS" id="11692">
    <property type="hits" value="23 hits in 79 CRISPR screens"/>
</dbReference>
<dbReference type="ChiTaRS" id="Gfer">
    <property type="organism name" value="mouse"/>
</dbReference>
<dbReference type="PRO" id="PR:P56213"/>
<dbReference type="Proteomes" id="UP000000589">
    <property type="component" value="Chromosome 17"/>
</dbReference>
<dbReference type="RNAct" id="P56213">
    <property type="molecule type" value="protein"/>
</dbReference>
<dbReference type="Bgee" id="ENSMUSG00000040888">
    <property type="expression patterns" value="Expressed in seminiferous tubule of testis and 263 other cell types or tissues"/>
</dbReference>
<dbReference type="ExpressionAtlas" id="P56213">
    <property type="expression patterns" value="baseline and differential"/>
</dbReference>
<dbReference type="GO" id="GO:0005829">
    <property type="term" value="C:cytosol"/>
    <property type="evidence" value="ECO:0007669"/>
    <property type="project" value="Ensembl"/>
</dbReference>
<dbReference type="GO" id="GO:0005758">
    <property type="term" value="C:mitochondrial intermembrane space"/>
    <property type="evidence" value="ECO:0007669"/>
    <property type="project" value="UniProtKB-SubCell"/>
</dbReference>
<dbReference type="GO" id="GO:0005739">
    <property type="term" value="C:mitochondrion"/>
    <property type="evidence" value="ECO:0007005"/>
    <property type="project" value="MGI"/>
</dbReference>
<dbReference type="GO" id="GO:0050660">
    <property type="term" value="F:flavin adenine dinucleotide binding"/>
    <property type="evidence" value="ECO:0000250"/>
    <property type="project" value="UniProtKB"/>
</dbReference>
<dbReference type="GO" id="GO:0016971">
    <property type="term" value="F:flavin-dependent sulfhydryl oxidase activity"/>
    <property type="evidence" value="ECO:0007669"/>
    <property type="project" value="InterPro"/>
</dbReference>
<dbReference type="GO" id="GO:0008083">
    <property type="term" value="F:growth factor activity"/>
    <property type="evidence" value="ECO:0007669"/>
    <property type="project" value="UniProtKB-KW"/>
</dbReference>
<dbReference type="GO" id="GO:0015035">
    <property type="term" value="F:protein-disulfide reductase activity"/>
    <property type="evidence" value="ECO:0000250"/>
    <property type="project" value="UniProtKB"/>
</dbReference>
<dbReference type="GO" id="GO:0160203">
    <property type="term" value="P:mitochondrial disulfide relay system"/>
    <property type="evidence" value="ECO:0007669"/>
    <property type="project" value="Ensembl"/>
</dbReference>
<dbReference type="FunFam" id="1.20.120.310:FF:000003">
    <property type="entry name" value="Sulfhydryl oxidase"/>
    <property type="match status" value="1"/>
</dbReference>
<dbReference type="Gene3D" id="1.20.120.310">
    <property type="entry name" value="ERV/ALR sulfhydryl oxidase domain"/>
    <property type="match status" value="1"/>
</dbReference>
<dbReference type="InterPro" id="IPR039799">
    <property type="entry name" value="ALR/ERV"/>
</dbReference>
<dbReference type="InterPro" id="IPR036774">
    <property type="entry name" value="ERV/ALR_sulphydryl_oxid_sf"/>
</dbReference>
<dbReference type="InterPro" id="IPR017905">
    <property type="entry name" value="ERV/ALR_sulphydryl_oxidase"/>
</dbReference>
<dbReference type="PANTHER" id="PTHR12645">
    <property type="entry name" value="ALR/ERV"/>
    <property type="match status" value="1"/>
</dbReference>
<dbReference type="PANTHER" id="PTHR12645:SF0">
    <property type="entry name" value="FAD-LINKED SULFHYDRYL OXIDASE ALR"/>
    <property type="match status" value="1"/>
</dbReference>
<dbReference type="Pfam" id="PF04777">
    <property type="entry name" value="Evr1_Alr"/>
    <property type="match status" value="1"/>
</dbReference>
<dbReference type="SUPFAM" id="SSF69000">
    <property type="entry name" value="FAD-dependent thiol oxidase"/>
    <property type="match status" value="1"/>
</dbReference>
<dbReference type="PROSITE" id="PS51324">
    <property type="entry name" value="ERV_ALR"/>
    <property type="match status" value="1"/>
</dbReference>
<name>ALR_MOUSE</name>
<reference key="1">
    <citation type="journal article" date="1996" name="Mol. Med.">
        <title>Analysis of the structure and expression of the augmenter of liver regeneration (ALR) gene.</title>
        <authorList>
            <person name="Giorda R."/>
            <person name="Hagiya M."/>
            <person name="Seki T."/>
            <person name="Shimonishi M."/>
            <person name="Sakai H."/>
            <person name="Michaelson J."/>
            <person name="Francavilla A."/>
            <person name="Starzl T.E."/>
            <person name="Trucco M."/>
        </authorList>
    </citation>
    <scope>NUCLEOTIDE SEQUENCE [GENOMIC DNA]</scope>
    <scope>TISSUE SPECIFICITY</scope>
    <source>
        <strain>C57BL/6 X CBA</strain>
    </source>
</reference>
<reference key="2">
    <citation type="submission" date="2000-04" db="EMBL/GenBank/DDBJ databases">
        <title>Isolation of full-length cDNA clones from mouse brain cDNA library made by oligo-capping method.</title>
        <authorList>
            <person name="Osada N."/>
            <person name="Kusuda J."/>
            <person name="Tanuma R."/>
            <person name="Ito A."/>
            <person name="Hirata M."/>
            <person name="Sugano S."/>
            <person name="Hashimoto K."/>
        </authorList>
    </citation>
    <scope>NUCLEOTIDE SEQUENCE [LARGE SCALE MRNA]</scope>
    <source>
        <strain>C57BL/6J</strain>
        <tissue>Brain</tissue>
    </source>
</reference>
<reference key="3">
    <citation type="journal article" date="2005" name="Science">
        <title>The transcriptional landscape of the mammalian genome.</title>
        <authorList>
            <person name="Carninci P."/>
            <person name="Kasukawa T."/>
            <person name="Katayama S."/>
            <person name="Gough J."/>
            <person name="Frith M.C."/>
            <person name="Maeda N."/>
            <person name="Oyama R."/>
            <person name="Ravasi T."/>
            <person name="Lenhard B."/>
            <person name="Wells C."/>
            <person name="Kodzius R."/>
            <person name="Shimokawa K."/>
            <person name="Bajic V.B."/>
            <person name="Brenner S.E."/>
            <person name="Batalov S."/>
            <person name="Forrest A.R."/>
            <person name="Zavolan M."/>
            <person name="Davis M.J."/>
            <person name="Wilming L.G."/>
            <person name="Aidinis V."/>
            <person name="Allen J.E."/>
            <person name="Ambesi-Impiombato A."/>
            <person name="Apweiler R."/>
            <person name="Aturaliya R.N."/>
            <person name="Bailey T.L."/>
            <person name="Bansal M."/>
            <person name="Baxter L."/>
            <person name="Beisel K.W."/>
            <person name="Bersano T."/>
            <person name="Bono H."/>
            <person name="Chalk A.M."/>
            <person name="Chiu K.P."/>
            <person name="Choudhary V."/>
            <person name="Christoffels A."/>
            <person name="Clutterbuck D.R."/>
            <person name="Crowe M.L."/>
            <person name="Dalla E."/>
            <person name="Dalrymple B.P."/>
            <person name="de Bono B."/>
            <person name="Della Gatta G."/>
            <person name="di Bernardo D."/>
            <person name="Down T."/>
            <person name="Engstrom P."/>
            <person name="Fagiolini M."/>
            <person name="Faulkner G."/>
            <person name="Fletcher C.F."/>
            <person name="Fukushima T."/>
            <person name="Furuno M."/>
            <person name="Futaki S."/>
            <person name="Gariboldi M."/>
            <person name="Georgii-Hemming P."/>
            <person name="Gingeras T.R."/>
            <person name="Gojobori T."/>
            <person name="Green R.E."/>
            <person name="Gustincich S."/>
            <person name="Harbers M."/>
            <person name="Hayashi Y."/>
            <person name="Hensch T.K."/>
            <person name="Hirokawa N."/>
            <person name="Hill D."/>
            <person name="Huminiecki L."/>
            <person name="Iacono M."/>
            <person name="Ikeo K."/>
            <person name="Iwama A."/>
            <person name="Ishikawa T."/>
            <person name="Jakt M."/>
            <person name="Kanapin A."/>
            <person name="Katoh M."/>
            <person name="Kawasawa Y."/>
            <person name="Kelso J."/>
            <person name="Kitamura H."/>
            <person name="Kitano H."/>
            <person name="Kollias G."/>
            <person name="Krishnan S.P."/>
            <person name="Kruger A."/>
            <person name="Kummerfeld S.K."/>
            <person name="Kurochkin I.V."/>
            <person name="Lareau L.F."/>
            <person name="Lazarevic D."/>
            <person name="Lipovich L."/>
            <person name="Liu J."/>
            <person name="Liuni S."/>
            <person name="McWilliam S."/>
            <person name="Madan Babu M."/>
            <person name="Madera M."/>
            <person name="Marchionni L."/>
            <person name="Matsuda H."/>
            <person name="Matsuzawa S."/>
            <person name="Miki H."/>
            <person name="Mignone F."/>
            <person name="Miyake S."/>
            <person name="Morris K."/>
            <person name="Mottagui-Tabar S."/>
            <person name="Mulder N."/>
            <person name="Nakano N."/>
            <person name="Nakauchi H."/>
            <person name="Ng P."/>
            <person name="Nilsson R."/>
            <person name="Nishiguchi S."/>
            <person name="Nishikawa S."/>
            <person name="Nori F."/>
            <person name="Ohara O."/>
            <person name="Okazaki Y."/>
            <person name="Orlando V."/>
            <person name="Pang K.C."/>
            <person name="Pavan W.J."/>
            <person name="Pavesi G."/>
            <person name="Pesole G."/>
            <person name="Petrovsky N."/>
            <person name="Piazza S."/>
            <person name="Reed J."/>
            <person name="Reid J.F."/>
            <person name="Ring B.Z."/>
            <person name="Ringwald M."/>
            <person name="Rost B."/>
            <person name="Ruan Y."/>
            <person name="Salzberg S.L."/>
            <person name="Sandelin A."/>
            <person name="Schneider C."/>
            <person name="Schoenbach C."/>
            <person name="Sekiguchi K."/>
            <person name="Semple C.A."/>
            <person name="Seno S."/>
            <person name="Sessa L."/>
            <person name="Sheng Y."/>
            <person name="Shibata Y."/>
            <person name="Shimada H."/>
            <person name="Shimada K."/>
            <person name="Silva D."/>
            <person name="Sinclair B."/>
            <person name="Sperling S."/>
            <person name="Stupka E."/>
            <person name="Sugiura K."/>
            <person name="Sultana R."/>
            <person name="Takenaka Y."/>
            <person name="Taki K."/>
            <person name="Tammoja K."/>
            <person name="Tan S.L."/>
            <person name="Tang S."/>
            <person name="Taylor M.S."/>
            <person name="Tegner J."/>
            <person name="Teichmann S.A."/>
            <person name="Ueda H.R."/>
            <person name="van Nimwegen E."/>
            <person name="Verardo R."/>
            <person name="Wei C.L."/>
            <person name="Yagi K."/>
            <person name="Yamanishi H."/>
            <person name="Zabarovsky E."/>
            <person name="Zhu S."/>
            <person name="Zimmer A."/>
            <person name="Hide W."/>
            <person name="Bult C."/>
            <person name="Grimmond S.M."/>
            <person name="Teasdale R.D."/>
            <person name="Liu E.T."/>
            <person name="Brusic V."/>
            <person name="Quackenbush J."/>
            <person name="Wahlestedt C."/>
            <person name="Mattick J.S."/>
            <person name="Hume D.A."/>
            <person name="Kai C."/>
            <person name="Sasaki D."/>
            <person name="Tomaru Y."/>
            <person name="Fukuda S."/>
            <person name="Kanamori-Katayama M."/>
            <person name="Suzuki M."/>
            <person name="Aoki J."/>
            <person name="Arakawa T."/>
            <person name="Iida J."/>
            <person name="Imamura K."/>
            <person name="Itoh M."/>
            <person name="Kato T."/>
            <person name="Kawaji H."/>
            <person name="Kawagashira N."/>
            <person name="Kawashima T."/>
            <person name="Kojima M."/>
            <person name="Kondo S."/>
            <person name="Konno H."/>
            <person name="Nakano K."/>
            <person name="Ninomiya N."/>
            <person name="Nishio T."/>
            <person name="Okada M."/>
            <person name="Plessy C."/>
            <person name="Shibata K."/>
            <person name="Shiraki T."/>
            <person name="Suzuki S."/>
            <person name="Tagami M."/>
            <person name="Waki K."/>
            <person name="Watahiki A."/>
            <person name="Okamura-Oho Y."/>
            <person name="Suzuki H."/>
            <person name="Kawai J."/>
            <person name="Hayashizaki Y."/>
        </authorList>
    </citation>
    <scope>NUCLEOTIDE SEQUENCE [LARGE SCALE MRNA]</scope>
    <source>
        <strain>C57BL/6J</strain>
        <tissue>Kidney</tissue>
    </source>
</reference>
<reference key="4">
    <citation type="submission" date="2005-07" db="EMBL/GenBank/DDBJ databases">
        <authorList>
            <person name="Mural R.J."/>
            <person name="Adams M.D."/>
            <person name="Myers E.W."/>
            <person name="Smith H.O."/>
            <person name="Venter J.C."/>
        </authorList>
    </citation>
    <scope>NUCLEOTIDE SEQUENCE [LARGE SCALE GENOMIC DNA]</scope>
</reference>
<reference key="5">
    <citation type="journal article" date="2004" name="Genome Res.">
        <title>The status, quality, and expansion of the NIH full-length cDNA project: the Mammalian Gene Collection (MGC).</title>
        <authorList>
            <consortium name="The MGC Project Team"/>
        </authorList>
    </citation>
    <scope>NUCLEOTIDE SEQUENCE [LARGE SCALE MRNA]</scope>
    <source>
        <strain>FVB/N</strain>
        <tissue>Mammary tumor</tissue>
    </source>
</reference>
<reference key="6">
    <citation type="journal article" date="1999" name="Zhonghua Gan Zang Bing Za Zhi">
        <title>Cloning and sequence analysis of a mouse cDNA coding for augmenter of liver regeneration.</title>
        <authorList>
            <person name="Cheng J."/>
            <person name="Zhong Y.W."/>
            <person name="Liu Y."/>
            <person name="Dong J."/>
            <person name="Yang J.Z."/>
            <person name="Chen J.M."/>
        </authorList>
    </citation>
    <scope>NUCLEOTIDE SEQUENCE [MRNA] OF 45-198</scope>
    <source>
        <strain>C57BL/6 X CBA</strain>
    </source>
</reference>
<reference key="7">
    <citation type="journal article" date="2010" name="Cell">
        <title>A tissue-specific atlas of mouse protein phosphorylation and expression.</title>
        <authorList>
            <person name="Huttlin E.L."/>
            <person name="Jedrychowski M.P."/>
            <person name="Elias J.E."/>
            <person name="Goswami T."/>
            <person name="Rad R."/>
            <person name="Beausoleil S.A."/>
            <person name="Villen J."/>
            <person name="Haas W."/>
            <person name="Sowa M.E."/>
            <person name="Gygi S.P."/>
        </authorList>
    </citation>
    <scope>IDENTIFICATION BY MASS SPECTROMETRY [LARGE SCALE ANALYSIS]</scope>
    <source>
        <tissue>Brain</tissue>
        <tissue>Kidney</tissue>
        <tissue>Liver</tissue>
        <tissue>Pancreas</tissue>
        <tissue>Spleen</tissue>
    </source>
</reference>
<protein>
    <recommendedName>
        <fullName>FAD-linked sulfhydryl oxidase ALR</fullName>
        <ecNumber>1.8.3.2</ecNumber>
    </recommendedName>
    <alternativeName>
        <fullName>Augmenter of liver regeneration</fullName>
    </alternativeName>
</protein>
<comment type="function">
    <text evidence="2">FAD-dependent sulfhydryl oxidase that regenerates the redox-active disulfide bonds in CHCHD4/MIA40, a chaperone essential for disulfide bond formation and protein folding in the mitochondrial intermembrane space. The reduced form of CHCHD4/MIA40 forms a transient intermolecular disulfide bridge with GFER/ERV1, resulting in regeneration of the essential disulfide bonds in CHCHD4/MIA40, while GFER/ERV1 becomes re-oxidized by donating electrons to cytochrome c or molecular oxygen (By similarity).</text>
</comment>
<comment type="catalytic activity">
    <reaction>
        <text>2 R'C(R)SH + O2 = R'C(R)S-S(R)CR' + H2O2</text>
        <dbReference type="Rhea" id="RHEA:17357"/>
        <dbReference type="ChEBI" id="CHEBI:15379"/>
        <dbReference type="ChEBI" id="CHEBI:16240"/>
        <dbReference type="ChEBI" id="CHEBI:16520"/>
        <dbReference type="ChEBI" id="CHEBI:17412"/>
        <dbReference type="EC" id="1.8.3.2"/>
    </reaction>
</comment>
<comment type="cofactor">
    <cofactor evidence="3">
        <name>FAD</name>
        <dbReference type="ChEBI" id="CHEBI:57692"/>
    </cofactor>
</comment>
<comment type="subunit">
    <text evidence="2">Homodimer; disulfide-linked. Interacts with CHCHD4/MIA40.</text>
</comment>
<comment type="subcellular location">
    <subcellularLocation>
        <location evidence="2">Mitochondrion intermembrane space</location>
    </subcellularLocation>
    <subcellularLocation>
        <location evidence="2">Mitochondrion</location>
    </subcellularLocation>
</comment>
<comment type="tissue specificity">
    <text evidence="5">Preferentially expressed in the liver and in testis.</text>
</comment>
<comment type="sequence caution" evidence="6">
    <conflict type="erroneous initiation">
        <sequence resource="EMBL-CDS" id="AAD36987"/>
    </conflict>
</comment>
<evidence type="ECO:0000250" key="1"/>
<evidence type="ECO:0000250" key="2">
    <source>
        <dbReference type="UniProtKB" id="P55789"/>
    </source>
</evidence>
<evidence type="ECO:0000255" key="3">
    <source>
        <dbReference type="PROSITE-ProRule" id="PRU00654"/>
    </source>
</evidence>
<evidence type="ECO:0000256" key="4">
    <source>
        <dbReference type="SAM" id="MobiDB-lite"/>
    </source>
</evidence>
<evidence type="ECO:0000269" key="5">
    <source>
    </source>
</evidence>
<evidence type="ECO:0000305" key="6"/>
<feature type="chain" id="PRO_0000208549" description="FAD-linked sulfhydryl oxidase ALR">
    <location>
        <begin position="1"/>
        <end position="198"/>
    </location>
</feature>
<feature type="domain" description="ERV/ALR sulfhydryl oxidase" evidence="3">
    <location>
        <begin position="88"/>
        <end position="188"/>
    </location>
</feature>
<feature type="region of interest" description="Disordered" evidence="4">
    <location>
        <begin position="1"/>
        <end position="59"/>
    </location>
</feature>
<feature type="compositionally biased region" description="Basic and acidic residues" evidence="4">
    <location>
        <begin position="33"/>
        <end position="46"/>
    </location>
</feature>
<feature type="binding site" evidence="1">
    <location>
        <begin position="92"/>
        <end position="100"/>
    </location>
    <ligand>
        <name>FAD</name>
        <dbReference type="ChEBI" id="CHEBI:57692"/>
    </ligand>
</feature>
<feature type="binding site" evidence="1">
    <location>
        <position position="104"/>
    </location>
    <ligand>
        <name>FAD</name>
        <dbReference type="ChEBI" id="CHEBI:57692"/>
    </ligand>
</feature>
<feature type="binding site" evidence="1">
    <location>
        <position position="133"/>
    </location>
    <ligand>
        <name>FAD</name>
        <dbReference type="ChEBI" id="CHEBI:57692"/>
    </ligand>
</feature>
<feature type="binding site" evidence="1">
    <location>
        <begin position="164"/>
        <end position="176"/>
    </location>
    <ligand>
        <name>FAD</name>
        <dbReference type="ChEBI" id="CHEBI:57692"/>
    </ligand>
</feature>
<feature type="binding site" evidence="1">
    <location>
        <begin position="187"/>
        <end position="188"/>
    </location>
    <ligand>
        <name>FAD</name>
        <dbReference type="ChEBI" id="CHEBI:57692"/>
    </ligand>
</feature>
<feature type="disulfide bond" description="Interchain (with C-197)" evidence="3">
    <location>
        <position position="88"/>
    </location>
</feature>
<feature type="disulfide bond" description="Redox-active" evidence="3">
    <location>
        <begin position="135"/>
        <end position="138"/>
    </location>
</feature>
<feature type="disulfide bond" evidence="3">
    <location>
        <begin position="164"/>
        <end position="181"/>
    </location>
</feature>
<feature type="disulfide bond" description="Interchain (with C-88)" evidence="3">
    <location>
        <position position="197"/>
    </location>
</feature>
<feature type="sequence conflict" description="In Ref. 1; AAD10339." evidence="6" ref="1">
    <original>A</original>
    <variation>P</variation>
    <location>
        <position position="40"/>
    </location>
</feature>
<feature type="sequence conflict" description="In Ref. 1; AAD10339, 5; AAH23941 and 6; AAD36987." evidence="6" ref="1 5 6">
    <original>A</original>
    <variation>S</variation>
    <location>
        <position position="49"/>
    </location>
</feature>
<proteinExistence type="evidence at protein level"/>